<feature type="chain" id="PRO_0000319472" description="Snake venom metalloproteinase" evidence="1">
    <location>
        <begin position="1" status="less than"/>
        <end position="19"/>
    </location>
</feature>
<feature type="propeptide" id="PRO_0000319473" evidence="1">
    <location>
        <begin position="20"/>
        <end position="35"/>
    </location>
</feature>
<feature type="chain" id="PRO_0000319474" description="Disintegrin salmosin-2">
    <location>
        <begin position="36"/>
        <end position="108"/>
    </location>
</feature>
<feature type="domain" description="Peptidase M12B" evidence="4">
    <location>
        <begin position="1" status="less than"/>
        <end position="19"/>
    </location>
</feature>
<feature type="domain" description="Disintegrin" evidence="3">
    <location>
        <begin position="27"/>
        <end position="108"/>
    </location>
</feature>
<feature type="short sequence motif" description="Cell attachment site; atypical (KGD)">
    <location>
        <begin position="86"/>
        <end position="88"/>
    </location>
</feature>
<feature type="disulfide bond" evidence="2">
    <location>
        <begin position="41"/>
        <end position="56"/>
    </location>
</feature>
<feature type="disulfide bond" evidence="2">
    <location>
        <begin position="43"/>
        <end position="51"/>
    </location>
</feature>
<feature type="disulfide bond" evidence="2">
    <location>
        <begin position="50"/>
        <end position="73"/>
    </location>
</feature>
<feature type="disulfide bond" evidence="2">
    <location>
        <begin position="64"/>
        <end position="70"/>
    </location>
</feature>
<feature type="disulfide bond" evidence="2">
    <location>
        <begin position="69"/>
        <end position="94"/>
    </location>
</feature>
<feature type="disulfide bond" evidence="2 3">
    <location>
        <begin position="82"/>
        <end position="101"/>
    </location>
</feature>
<feature type="non-terminal residue" evidence="5">
    <location>
        <position position="1"/>
    </location>
</feature>
<accession>O93516</accession>
<reference key="1">
    <citation type="journal article" date="1998" name="Mol. Cells">
        <title>Cloning and characterization of novel disintegrins from Agkistrodon halys venom.</title>
        <authorList>
            <person name="Park D.-S."/>
            <person name="Kang I.-C."/>
            <person name="Kim H.-D."/>
            <person name="Chung K.-H."/>
            <person name="Kim D.-S."/>
            <person name="Yun Y.-D."/>
        </authorList>
    </citation>
    <scope>NUCLEOTIDE SEQUENCE [MRNA]</scope>
    <source>
        <tissue>Venom gland</tissue>
    </source>
</reference>
<organism>
    <name type="scientific">Gloydius brevicauda</name>
    <name type="common">Korean slamosa snake</name>
    <name type="synonym">Agkistrodon halys brevicaudus</name>
    <dbReference type="NCBI Taxonomy" id="3148161"/>
    <lineage>
        <taxon>Eukaryota</taxon>
        <taxon>Metazoa</taxon>
        <taxon>Chordata</taxon>
        <taxon>Craniata</taxon>
        <taxon>Vertebrata</taxon>
        <taxon>Euteleostomi</taxon>
        <taxon>Lepidosauria</taxon>
        <taxon>Squamata</taxon>
        <taxon>Bifurcata</taxon>
        <taxon>Unidentata</taxon>
        <taxon>Episquamata</taxon>
        <taxon>Toxicofera</taxon>
        <taxon>Serpentes</taxon>
        <taxon>Colubroidea</taxon>
        <taxon>Viperidae</taxon>
        <taxon>Crotalinae</taxon>
        <taxon>Gloydius</taxon>
    </lineage>
</organism>
<sequence length="108" mass="11726">NEYQTYLTDRNPQCILNEPLRTDTVSTPVSGNELLEAGKECDCGAPANPCCDAATCKLRPGEQCAEGLCCDQCRFMKEGTICQEAKGDWNDDTCTGQSADCPRNGFYG</sequence>
<protein>
    <recommendedName>
        <fullName>Zinc metalloproteinase/disintegrin</fullName>
    </recommendedName>
    <component>
        <recommendedName>
            <fullName>Snake venom metalloproteinase</fullName>
            <shortName>SVMP</shortName>
            <ecNumber>3.4.24.-</ecNumber>
        </recommendedName>
    </component>
    <component>
        <recommendedName>
            <fullName>Disintegrin salmosin-2</fullName>
        </recommendedName>
    </component>
</protein>
<name>VM2S2_GLOBR</name>
<dbReference type="EC" id="3.4.24.-"/>
<dbReference type="EMBL" id="AF055337">
    <property type="protein sequence ID" value="AAC42597.1"/>
    <property type="molecule type" value="mRNA"/>
</dbReference>
<dbReference type="SMR" id="O93516"/>
<dbReference type="GO" id="GO:0005576">
    <property type="term" value="C:extracellular region"/>
    <property type="evidence" value="ECO:0007669"/>
    <property type="project" value="UniProtKB-SubCell"/>
</dbReference>
<dbReference type="GO" id="GO:0005886">
    <property type="term" value="C:plasma membrane"/>
    <property type="evidence" value="ECO:0007669"/>
    <property type="project" value="TreeGrafter"/>
</dbReference>
<dbReference type="GO" id="GO:0046872">
    <property type="term" value="F:metal ion binding"/>
    <property type="evidence" value="ECO:0007669"/>
    <property type="project" value="UniProtKB-KW"/>
</dbReference>
<dbReference type="GO" id="GO:0008237">
    <property type="term" value="F:metallopeptidase activity"/>
    <property type="evidence" value="ECO:0007669"/>
    <property type="project" value="UniProtKB-KW"/>
</dbReference>
<dbReference type="GO" id="GO:0090729">
    <property type="term" value="F:toxin activity"/>
    <property type="evidence" value="ECO:0007669"/>
    <property type="project" value="UniProtKB-KW"/>
</dbReference>
<dbReference type="GO" id="GO:0006508">
    <property type="term" value="P:proteolysis"/>
    <property type="evidence" value="ECO:0007669"/>
    <property type="project" value="UniProtKB-KW"/>
</dbReference>
<dbReference type="FunFam" id="4.10.70.10:FF:000005">
    <property type="entry name" value="Zinc metalloproteinase/disintegrin"/>
    <property type="match status" value="1"/>
</dbReference>
<dbReference type="Gene3D" id="4.10.70.10">
    <property type="entry name" value="Disintegrin domain"/>
    <property type="match status" value="1"/>
</dbReference>
<dbReference type="InterPro" id="IPR018358">
    <property type="entry name" value="Disintegrin_CS"/>
</dbReference>
<dbReference type="InterPro" id="IPR001762">
    <property type="entry name" value="Disintegrin_dom"/>
</dbReference>
<dbReference type="InterPro" id="IPR036436">
    <property type="entry name" value="Disintegrin_dom_sf"/>
</dbReference>
<dbReference type="PANTHER" id="PTHR11905">
    <property type="entry name" value="ADAM A DISINTEGRIN AND METALLOPROTEASE DOMAIN"/>
    <property type="match status" value="1"/>
</dbReference>
<dbReference type="PANTHER" id="PTHR11905:SF32">
    <property type="entry name" value="DISINTEGRIN AND METALLOPROTEINASE DOMAIN-CONTAINING PROTEIN 28"/>
    <property type="match status" value="1"/>
</dbReference>
<dbReference type="Pfam" id="PF00200">
    <property type="entry name" value="Disintegrin"/>
    <property type="match status" value="1"/>
</dbReference>
<dbReference type="PRINTS" id="PR00289">
    <property type="entry name" value="DISINTEGRIN"/>
</dbReference>
<dbReference type="SMART" id="SM00050">
    <property type="entry name" value="DISIN"/>
    <property type="match status" value="1"/>
</dbReference>
<dbReference type="SUPFAM" id="SSF57552">
    <property type="entry name" value="Blood coagulation inhibitor (disintegrin)"/>
    <property type="match status" value="1"/>
</dbReference>
<dbReference type="PROSITE" id="PS00427">
    <property type="entry name" value="DISINTEGRIN_1"/>
    <property type="match status" value="1"/>
</dbReference>
<dbReference type="PROSITE" id="PS50214">
    <property type="entry name" value="DISINTEGRIN_2"/>
    <property type="match status" value="1"/>
</dbReference>
<proteinExistence type="evidence at transcript level"/>
<evidence type="ECO:0000250" key="1"/>
<evidence type="ECO:0000250" key="2">
    <source>
        <dbReference type="UniProtKB" id="Q0NZX5"/>
    </source>
</evidence>
<evidence type="ECO:0000255" key="3">
    <source>
        <dbReference type="PROSITE-ProRule" id="PRU00068"/>
    </source>
</evidence>
<evidence type="ECO:0000255" key="4">
    <source>
        <dbReference type="PROSITE-ProRule" id="PRU00276"/>
    </source>
</evidence>
<evidence type="ECO:0000305" key="5"/>
<evidence type="ECO:0000305" key="6">
    <source>
    </source>
</evidence>
<keyword id="KW-1217">Cell adhesion impairing toxin</keyword>
<keyword id="KW-1015">Disulfide bond</keyword>
<keyword id="KW-1199">Hemostasis impairing toxin</keyword>
<keyword id="KW-0378">Hydrolase</keyword>
<keyword id="KW-0479">Metal-binding</keyword>
<keyword id="KW-0482">Metalloprotease</keyword>
<keyword id="KW-1201">Platelet aggregation inhibiting toxin</keyword>
<keyword id="KW-0645">Protease</keyword>
<keyword id="KW-0964">Secreted</keyword>
<keyword id="KW-0800">Toxin</keyword>
<keyword id="KW-0862">Zinc</keyword>
<keyword id="KW-0865">Zymogen</keyword>
<comment type="function">
    <molecule>Snake venom metalloproteinase</molecule>
    <text evidence="1">Impairs hemostasis in the envenomed animal.</text>
</comment>
<comment type="function">
    <molecule>Disintegrin salmosin-2</molecule>
    <text evidence="1">Inhibits platelet aggregation induced by ADP, thrombin, platelet-activating factor and collagen. Acts by inhibiting fibrinogen interaction with platelet receptors GPIIb/GPIIIa (ITGA2B/ITGB3) (By similarity).</text>
</comment>
<comment type="cofactor">
    <cofactor evidence="1">
        <name>Zn(2+)</name>
        <dbReference type="ChEBI" id="CHEBI:29105"/>
    </cofactor>
    <text evidence="1">Binds 1 zinc ion per subunit.</text>
</comment>
<comment type="subunit">
    <text evidence="1">Monomeric (disintegrin).</text>
</comment>
<comment type="subcellular location">
    <subcellularLocation>
        <location evidence="6">Secreted</location>
    </subcellularLocation>
</comment>
<comment type="tissue specificity">
    <text evidence="6">Expressed by the venom gland.</text>
</comment>
<comment type="miscellaneous">
    <text>The disintegrin belongs to the medium disintegrin subfamily.</text>
</comment>
<comment type="similarity">
    <text evidence="5">Belongs to the venom metalloproteinase (M12B) family. P-II subfamily. P-IIa sub-subfamily.</text>
</comment>